<gene>
    <name type="primary">csmA</name>
</gene>
<proteinExistence type="evidence at protein level"/>
<reference key="1">
    <citation type="journal article" date="1988" name="FEBS Lett.">
        <title>The BChlc/e-binding polypeptides from chlorosomes of green photosynthetic bacteria.</title>
        <authorList>
            <person name="Wagner-Huber R."/>
            <person name="Brunisholz R."/>
            <person name="Frank G."/>
            <person name="Zuber H."/>
        </authorList>
    </citation>
    <scope>PROTEIN SEQUENCE</scope>
    <source>
        <strain>DSM 249 / 6230 / Tassajara</strain>
    </source>
</reference>
<reference key="2">
    <citation type="journal article" date="1991" name="Biochim. Biophys. Acta">
        <title>The amino acid sequence of a major protein component in the light harvesting complex of the green photosynthetic bacterium Chlorobium limicola f. thiosulfatophilum.</title>
        <authorList>
            <person name="Hoejrup P."/>
            <person name="Gerola P."/>
            <person name="Hansen H.F."/>
            <person name="Mikkelsen J.M."/>
            <person name="Shaded A.E."/>
            <person name="Knudsen J."/>
            <person name="Roepstorff P."/>
            <person name="Olson J.M."/>
        </authorList>
    </citation>
    <scope>PROTEIN SEQUENCE OF 1-22</scope>
</reference>
<protein>
    <recommendedName>
        <fullName>Bacteriochlorophyll c-binding protein</fullName>
        <shortName>BChl c-binding</shortName>
    </recommendedName>
    <alternativeName>
        <fullName>Chlorosome protein A</fullName>
    </alternativeName>
</protein>
<accession>P15524</accession>
<organism>
    <name type="scientific">Chlorobaculum thiosulfatiphilum</name>
    <name type="common">Chlorobium limicola f.sp. thiosulfatophilum</name>
    <dbReference type="NCBI Taxonomy" id="115852"/>
    <lineage>
        <taxon>Bacteria</taxon>
        <taxon>Pseudomonadati</taxon>
        <taxon>Chlorobiota</taxon>
        <taxon>Chlorobiia</taxon>
        <taxon>Chlorobiales</taxon>
        <taxon>Chlorobiaceae</taxon>
        <taxon>Chlorobaculum</taxon>
    </lineage>
</organism>
<keyword id="KW-0076">Bacteriochlorophyll</keyword>
<keyword id="KW-0148">Chlorophyll</keyword>
<keyword id="KW-0151">Chlorosome</keyword>
<keyword id="KW-0157">Chromophore</keyword>
<keyword id="KW-0903">Direct protein sequencing</keyword>
<keyword id="KW-0249">Electron transport</keyword>
<keyword id="KW-0460">Magnesium</keyword>
<keyword id="KW-0479">Metal-binding</keyword>
<keyword id="KW-0602">Photosynthesis</keyword>
<keyword id="KW-0813">Transport</keyword>
<dbReference type="PIR" id="S05562">
    <property type="entry name" value="S05562"/>
</dbReference>
<dbReference type="BMRB" id="P15524"/>
<dbReference type="SMR" id="P15524"/>
<dbReference type="GO" id="GO:0033105">
    <property type="term" value="C:chlorosome envelope"/>
    <property type="evidence" value="ECO:0007669"/>
    <property type="project" value="UniProtKB-SubCell"/>
</dbReference>
<dbReference type="GO" id="GO:0042314">
    <property type="term" value="F:bacteriochlorophyll binding"/>
    <property type="evidence" value="ECO:0007669"/>
    <property type="project" value="UniProtKB-KW"/>
</dbReference>
<dbReference type="GO" id="GO:0046872">
    <property type="term" value="F:metal ion binding"/>
    <property type="evidence" value="ECO:0007669"/>
    <property type="project" value="UniProtKB-KW"/>
</dbReference>
<dbReference type="GO" id="GO:0015979">
    <property type="term" value="P:photosynthesis"/>
    <property type="evidence" value="ECO:0007669"/>
    <property type="project" value="UniProtKB-KW"/>
</dbReference>
<dbReference type="Gene3D" id="1.20.5.950">
    <property type="entry name" value="bacteriochlorophyll c-binding protein"/>
    <property type="match status" value="1"/>
</dbReference>
<dbReference type="InterPro" id="IPR001470">
    <property type="entry name" value="Bchl_c-bd"/>
</dbReference>
<dbReference type="InterPro" id="IPR038387">
    <property type="entry name" value="Bchl_C-bd_sf"/>
</dbReference>
<dbReference type="Pfam" id="PF02043">
    <property type="entry name" value="Bac_chlorC"/>
    <property type="match status" value="1"/>
</dbReference>
<dbReference type="PIRSF" id="PIRSF002903">
    <property type="entry name" value="Bac_chlorC_bd"/>
    <property type="match status" value="1"/>
</dbReference>
<dbReference type="PRINTS" id="PR00656">
    <property type="entry name" value="BCHLROPHYLLC"/>
</dbReference>
<comment type="function">
    <text>Component of the photosynthetic apparatus. The light harvesting B740 complex binds bacteriochlorophyll c.</text>
</comment>
<comment type="subcellular location">
    <subcellularLocation>
        <location>Chlorosome</location>
        <location>Chlorosome envelope</location>
    </subcellularLocation>
</comment>
<comment type="similarity">
    <text evidence="1">Belongs to the BChl C/E-binding protein family.</text>
</comment>
<name>CSMA_CHLTI</name>
<sequence length="48" mass="5207">MSGGGVFTDILAAAGRIFEVMVEGHWETVGMLFDSLGKGTMRINRNAY</sequence>
<evidence type="ECO:0000305" key="1"/>
<feature type="chain" id="PRO_0000219550" description="Bacteriochlorophyll c-binding protein">
    <location>
        <begin position="1"/>
        <end position="48" status="greater than"/>
    </location>
</feature>
<feature type="binding site" description="axial binding residue" evidence="1">
    <location>
        <position position="25"/>
    </location>
    <ligand>
        <name>a bacteriochlorophyll c</name>
        <dbReference type="ChEBI" id="CHEBI:60197"/>
    </ligand>
    <ligandPart>
        <name>Mg</name>
        <dbReference type="ChEBI" id="CHEBI:25107"/>
    </ligandPart>
</feature>
<feature type="non-terminal residue">
    <location>
        <position position="48"/>
    </location>
</feature>